<evidence type="ECO:0000250" key="1">
    <source>
        <dbReference type="UniProtKB" id="O52791"/>
    </source>
</evidence>
<evidence type="ECO:0000250" key="2">
    <source>
        <dbReference type="UniProtKB" id="Q96IR7"/>
    </source>
</evidence>
<evidence type="ECO:0000255" key="3">
    <source>
        <dbReference type="PROSITE-ProRule" id="PRU01163"/>
    </source>
</evidence>
<evidence type="ECO:0000305" key="4"/>
<evidence type="ECO:0000312" key="5">
    <source>
        <dbReference type="MGI" id="MGI:2444646"/>
    </source>
</evidence>
<protein>
    <recommendedName>
        <fullName>4-hydroxyphenylpyruvate dioxygenase-like protein</fullName>
        <shortName evidence="2">HPDL</shortName>
        <ecNumber evidence="2">1.13.11.46</ecNumber>
    </recommendedName>
    <alternativeName>
        <fullName>Glyoxalase domain-containing protein 1</fullName>
    </alternativeName>
</protein>
<name>HPDL_MOUSE</name>
<gene>
    <name evidence="5" type="primary">Hpdl</name>
    <name type="synonym">Gloxd1</name>
</gene>
<organism>
    <name type="scientific">Mus musculus</name>
    <name type="common">Mouse</name>
    <dbReference type="NCBI Taxonomy" id="10090"/>
    <lineage>
        <taxon>Eukaryota</taxon>
        <taxon>Metazoa</taxon>
        <taxon>Chordata</taxon>
        <taxon>Craniata</taxon>
        <taxon>Vertebrata</taxon>
        <taxon>Euteleostomi</taxon>
        <taxon>Mammalia</taxon>
        <taxon>Eutheria</taxon>
        <taxon>Euarchontoglires</taxon>
        <taxon>Glires</taxon>
        <taxon>Rodentia</taxon>
        <taxon>Myomorpha</taxon>
        <taxon>Muroidea</taxon>
        <taxon>Muridae</taxon>
        <taxon>Murinae</taxon>
        <taxon>Mus</taxon>
        <taxon>Mus</taxon>
    </lineage>
</organism>
<accession>Q8K248</accession>
<reference key="1">
    <citation type="journal article" date="2005" name="Science">
        <title>The transcriptional landscape of the mammalian genome.</title>
        <authorList>
            <person name="Carninci P."/>
            <person name="Kasukawa T."/>
            <person name="Katayama S."/>
            <person name="Gough J."/>
            <person name="Frith M.C."/>
            <person name="Maeda N."/>
            <person name="Oyama R."/>
            <person name="Ravasi T."/>
            <person name="Lenhard B."/>
            <person name="Wells C."/>
            <person name="Kodzius R."/>
            <person name="Shimokawa K."/>
            <person name="Bajic V.B."/>
            <person name="Brenner S.E."/>
            <person name="Batalov S."/>
            <person name="Forrest A.R."/>
            <person name="Zavolan M."/>
            <person name="Davis M.J."/>
            <person name="Wilming L.G."/>
            <person name="Aidinis V."/>
            <person name="Allen J.E."/>
            <person name="Ambesi-Impiombato A."/>
            <person name="Apweiler R."/>
            <person name="Aturaliya R.N."/>
            <person name="Bailey T.L."/>
            <person name="Bansal M."/>
            <person name="Baxter L."/>
            <person name="Beisel K.W."/>
            <person name="Bersano T."/>
            <person name="Bono H."/>
            <person name="Chalk A.M."/>
            <person name="Chiu K.P."/>
            <person name="Choudhary V."/>
            <person name="Christoffels A."/>
            <person name="Clutterbuck D.R."/>
            <person name="Crowe M.L."/>
            <person name="Dalla E."/>
            <person name="Dalrymple B.P."/>
            <person name="de Bono B."/>
            <person name="Della Gatta G."/>
            <person name="di Bernardo D."/>
            <person name="Down T."/>
            <person name="Engstrom P."/>
            <person name="Fagiolini M."/>
            <person name="Faulkner G."/>
            <person name="Fletcher C.F."/>
            <person name="Fukushima T."/>
            <person name="Furuno M."/>
            <person name="Futaki S."/>
            <person name="Gariboldi M."/>
            <person name="Georgii-Hemming P."/>
            <person name="Gingeras T.R."/>
            <person name="Gojobori T."/>
            <person name="Green R.E."/>
            <person name="Gustincich S."/>
            <person name="Harbers M."/>
            <person name="Hayashi Y."/>
            <person name="Hensch T.K."/>
            <person name="Hirokawa N."/>
            <person name="Hill D."/>
            <person name="Huminiecki L."/>
            <person name="Iacono M."/>
            <person name="Ikeo K."/>
            <person name="Iwama A."/>
            <person name="Ishikawa T."/>
            <person name="Jakt M."/>
            <person name="Kanapin A."/>
            <person name="Katoh M."/>
            <person name="Kawasawa Y."/>
            <person name="Kelso J."/>
            <person name="Kitamura H."/>
            <person name="Kitano H."/>
            <person name="Kollias G."/>
            <person name="Krishnan S.P."/>
            <person name="Kruger A."/>
            <person name="Kummerfeld S.K."/>
            <person name="Kurochkin I.V."/>
            <person name="Lareau L.F."/>
            <person name="Lazarevic D."/>
            <person name="Lipovich L."/>
            <person name="Liu J."/>
            <person name="Liuni S."/>
            <person name="McWilliam S."/>
            <person name="Madan Babu M."/>
            <person name="Madera M."/>
            <person name="Marchionni L."/>
            <person name="Matsuda H."/>
            <person name="Matsuzawa S."/>
            <person name="Miki H."/>
            <person name="Mignone F."/>
            <person name="Miyake S."/>
            <person name="Morris K."/>
            <person name="Mottagui-Tabar S."/>
            <person name="Mulder N."/>
            <person name="Nakano N."/>
            <person name="Nakauchi H."/>
            <person name="Ng P."/>
            <person name="Nilsson R."/>
            <person name="Nishiguchi S."/>
            <person name="Nishikawa S."/>
            <person name="Nori F."/>
            <person name="Ohara O."/>
            <person name="Okazaki Y."/>
            <person name="Orlando V."/>
            <person name="Pang K.C."/>
            <person name="Pavan W.J."/>
            <person name="Pavesi G."/>
            <person name="Pesole G."/>
            <person name="Petrovsky N."/>
            <person name="Piazza S."/>
            <person name="Reed J."/>
            <person name="Reid J.F."/>
            <person name="Ring B.Z."/>
            <person name="Ringwald M."/>
            <person name="Rost B."/>
            <person name="Ruan Y."/>
            <person name="Salzberg S.L."/>
            <person name="Sandelin A."/>
            <person name="Schneider C."/>
            <person name="Schoenbach C."/>
            <person name="Sekiguchi K."/>
            <person name="Semple C.A."/>
            <person name="Seno S."/>
            <person name="Sessa L."/>
            <person name="Sheng Y."/>
            <person name="Shibata Y."/>
            <person name="Shimada H."/>
            <person name="Shimada K."/>
            <person name="Silva D."/>
            <person name="Sinclair B."/>
            <person name="Sperling S."/>
            <person name="Stupka E."/>
            <person name="Sugiura K."/>
            <person name="Sultana R."/>
            <person name="Takenaka Y."/>
            <person name="Taki K."/>
            <person name="Tammoja K."/>
            <person name="Tan S.L."/>
            <person name="Tang S."/>
            <person name="Taylor M.S."/>
            <person name="Tegner J."/>
            <person name="Teichmann S.A."/>
            <person name="Ueda H.R."/>
            <person name="van Nimwegen E."/>
            <person name="Verardo R."/>
            <person name="Wei C.L."/>
            <person name="Yagi K."/>
            <person name="Yamanishi H."/>
            <person name="Zabarovsky E."/>
            <person name="Zhu S."/>
            <person name="Zimmer A."/>
            <person name="Hide W."/>
            <person name="Bult C."/>
            <person name="Grimmond S.M."/>
            <person name="Teasdale R.D."/>
            <person name="Liu E.T."/>
            <person name="Brusic V."/>
            <person name="Quackenbush J."/>
            <person name="Wahlestedt C."/>
            <person name="Mattick J.S."/>
            <person name="Hume D.A."/>
            <person name="Kai C."/>
            <person name="Sasaki D."/>
            <person name="Tomaru Y."/>
            <person name="Fukuda S."/>
            <person name="Kanamori-Katayama M."/>
            <person name="Suzuki M."/>
            <person name="Aoki J."/>
            <person name="Arakawa T."/>
            <person name="Iida J."/>
            <person name="Imamura K."/>
            <person name="Itoh M."/>
            <person name="Kato T."/>
            <person name="Kawaji H."/>
            <person name="Kawagashira N."/>
            <person name="Kawashima T."/>
            <person name="Kojima M."/>
            <person name="Kondo S."/>
            <person name="Konno H."/>
            <person name="Nakano K."/>
            <person name="Ninomiya N."/>
            <person name="Nishio T."/>
            <person name="Okada M."/>
            <person name="Plessy C."/>
            <person name="Shibata K."/>
            <person name="Shiraki T."/>
            <person name="Suzuki S."/>
            <person name="Tagami M."/>
            <person name="Waki K."/>
            <person name="Watahiki A."/>
            <person name="Okamura-Oho Y."/>
            <person name="Suzuki H."/>
            <person name="Kawai J."/>
            <person name="Hayashizaki Y."/>
        </authorList>
    </citation>
    <scope>NUCLEOTIDE SEQUENCE [LARGE SCALE MRNA]</scope>
    <source>
        <strain>C57BL/6J</strain>
        <tissue>Brain cortex</tissue>
        <tissue>Cecum</tissue>
    </source>
</reference>
<reference key="2">
    <citation type="journal article" date="2004" name="Genome Res.">
        <title>The status, quality, and expansion of the NIH full-length cDNA project: the Mammalian Gene Collection (MGC).</title>
        <authorList>
            <consortium name="The MGC Project Team"/>
        </authorList>
    </citation>
    <scope>NUCLEOTIDE SEQUENCE [LARGE SCALE MRNA]</scope>
    <source>
        <strain>FVB/N</strain>
        <tissue>Mammary tumor</tissue>
    </source>
</reference>
<feature type="chain" id="PRO_0000271120" description="4-hydroxyphenylpyruvate dioxygenase-like protein">
    <location>
        <begin position="1"/>
        <end position="371"/>
    </location>
</feature>
<feature type="domain" description="VOC 1" evidence="3">
    <location>
        <begin position="7"/>
        <end position="135"/>
    </location>
</feature>
<feature type="domain" description="VOC 2" evidence="3">
    <location>
        <begin position="160"/>
        <end position="328"/>
    </location>
</feature>
<feature type="binding site" evidence="1">
    <location>
        <position position="163"/>
    </location>
    <ligand>
        <name>Fe cation</name>
        <dbReference type="ChEBI" id="CHEBI:24875"/>
    </ligand>
</feature>
<feature type="binding site" evidence="1">
    <location>
        <position position="258"/>
    </location>
    <ligand>
        <name>Fe cation</name>
        <dbReference type="ChEBI" id="CHEBI:24875"/>
    </ligand>
</feature>
<feature type="binding site" evidence="1">
    <location>
        <position position="339"/>
    </location>
    <ligand>
        <name>Fe cation</name>
        <dbReference type="ChEBI" id="CHEBI:24875"/>
    </ligand>
</feature>
<dbReference type="EC" id="1.13.11.46" evidence="2"/>
<dbReference type="EMBL" id="AK043902">
    <property type="protein sequence ID" value="BAC31697.1"/>
    <property type="molecule type" value="mRNA"/>
</dbReference>
<dbReference type="EMBL" id="AK049217">
    <property type="protein sequence ID" value="BAC33615.1"/>
    <property type="molecule type" value="mRNA"/>
</dbReference>
<dbReference type="EMBL" id="AK078929">
    <property type="protein sequence ID" value="BAC37467.1"/>
    <property type="molecule type" value="mRNA"/>
</dbReference>
<dbReference type="EMBL" id="BC034099">
    <property type="protein sequence ID" value="AAH34099.1"/>
    <property type="molecule type" value="mRNA"/>
</dbReference>
<dbReference type="CCDS" id="CCDS18519.1"/>
<dbReference type="RefSeq" id="NP_666368.1">
    <property type="nucleotide sequence ID" value="NM_146256.3"/>
</dbReference>
<dbReference type="SMR" id="Q8K248"/>
<dbReference type="BioGRID" id="232436">
    <property type="interactions" value="3"/>
</dbReference>
<dbReference type="FunCoup" id="Q8K248">
    <property type="interactions" value="431"/>
</dbReference>
<dbReference type="STRING" id="10090.ENSMUSP00000062327"/>
<dbReference type="iPTMnet" id="Q8K248"/>
<dbReference type="PhosphoSitePlus" id="Q8K248"/>
<dbReference type="jPOST" id="Q8K248"/>
<dbReference type="PaxDb" id="10090-ENSMUSP00000062327"/>
<dbReference type="PeptideAtlas" id="Q8K248"/>
<dbReference type="ProteomicsDB" id="273165"/>
<dbReference type="Antibodypedia" id="32602">
    <property type="antibodies" value="46 antibodies from 18 providers"/>
</dbReference>
<dbReference type="Ensembl" id="ENSMUST00000055436.5">
    <property type="protein sequence ID" value="ENSMUSP00000062327.4"/>
    <property type="gene ID" value="ENSMUSG00000043155.5"/>
</dbReference>
<dbReference type="GeneID" id="242642"/>
<dbReference type="KEGG" id="mmu:242642"/>
<dbReference type="UCSC" id="uc008uho.1">
    <property type="organism name" value="mouse"/>
</dbReference>
<dbReference type="AGR" id="MGI:2444646"/>
<dbReference type="CTD" id="84842"/>
<dbReference type="MGI" id="MGI:2444646">
    <property type="gene designation" value="Hpdl"/>
</dbReference>
<dbReference type="VEuPathDB" id="HostDB:ENSMUSG00000043155"/>
<dbReference type="eggNOG" id="KOG0638">
    <property type="taxonomic scope" value="Eukaryota"/>
</dbReference>
<dbReference type="GeneTree" id="ENSGT00530000063474"/>
<dbReference type="HOGENOM" id="CLU_034004_2_0_1"/>
<dbReference type="InParanoid" id="Q8K248"/>
<dbReference type="OMA" id="PTLMRWF"/>
<dbReference type="OrthoDB" id="414569at2759"/>
<dbReference type="PhylomeDB" id="Q8K248"/>
<dbReference type="TreeFam" id="TF300622"/>
<dbReference type="Reactome" id="R-MMU-2142789">
    <property type="pathway name" value="Ubiquinol biosynthesis"/>
</dbReference>
<dbReference type="BioGRID-ORCS" id="242642">
    <property type="hits" value="4 hits in 79 CRISPR screens"/>
</dbReference>
<dbReference type="PRO" id="PR:Q8K248"/>
<dbReference type="Proteomes" id="UP000000589">
    <property type="component" value="Chromosome 4"/>
</dbReference>
<dbReference type="RNAct" id="Q8K248">
    <property type="molecule type" value="protein"/>
</dbReference>
<dbReference type="Bgee" id="ENSMUSG00000043155">
    <property type="expression patterns" value="Expressed in embryonic cell in blastocyst and 63 other cell types or tissues"/>
</dbReference>
<dbReference type="GO" id="GO:0005739">
    <property type="term" value="C:mitochondrion"/>
    <property type="evidence" value="ECO:0000314"/>
    <property type="project" value="UniProtKB"/>
</dbReference>
<dbReference type="GO" id="GO:0050585">
    <property type="term" value="F:4-hydroxymandelate synthase activity"/>
    <property type="evidence" value="ECO:0000250"/>
    <property type="project" value="UniProtKB"/>
</dbReference>
<dbReference type="GO" id="GO:0003868">
    <property type="term" value="F:4-hydroxyphenylpyruvate dioxygenase activity"/>
    <property type="evidence" value="ECO:0007669"/>
    <property type="project" value="InterPro"/>
</dbReference>
<dbReference type="GO" id="GO:0046872">
    <property type="term" value="F:metal ion binding"/>
    <property type="evidence" value="ECO:0007669"/>
    <property type="project" value="UniProtKB-KW"/>
</dbReference>
<dbReference type="GO" id="GO:0009072">
    <property type="term" value="P:aromatic amino acid metabolic process"/>
    <property type="evidence" value="ECO:0007669"/>
    <property type="project" value="InterPro"/>
</dbReference>
<dbReference type="CDD" id="cd07250">
    <property type="entry name" value="HPPD_C_like"/>
    <property type="match status" value="1"/>
</dbReference>
<dbReference type="CDD" id="cd08342">
    <property type="entry name" value="HPPD_N_like"/>
    <property type="match status" value="1"/>
</dbReference>
<dbReference type="Gene3D" id="3.10.180.10">
    <property type="entry name" value="2,3-Dihydroxybiphenyl 1,2-Dioxygenase, domain 1"/>
    <property type="match status" value="2"/>
</dbReference>
<dbReference type="InterPro" id="IPR005956">
    <property type="entry name" value="4OHPhenylPyrv_dOase"/>
</dbReference>
<dbReference type="InterPro" id="IPR041735">
    <property type="entry name" value="4OHPhenylPyrv_dOase_C"/>
</dbReference>
<dbReference type="InterPro" id="IPR041736">
    <property type="entry name" value="4OHPhenylPyrv_dOase_N"/>
</dbReference>
<dbReference type="InterPro" id="IPR029068">
    <property type="entry name" value="Glyas_Bleomycin-R_OHBP_Dase"/>
</dbReference>
<dbReference type="InterPro" id="IPR037523">
    <property type="entry name" value="VOC"/>
</dbReference>
<dbReference type="PANTHER" id="PTHR11959">
    <property type="entry name" value="4-HYDROXYPHENYLPYRUVATE DIOXYGENASE"/>
    <property type="match status" value="1"/>
</dbReference>
<dbReference type="PANTHER" id="PTHR11959:SF10">
    <property type="entry name" value="4-HYDROXYPHENYLPYRUVATE DIOXYGENASE-LIKE PROTEIN"/>
    <property type="match status" value="1"/>
</dbReference>
<dbReference type="PIRSF" id="PIRSF009283">
    <property type="entry name" value="HPP_dOase"/>
    <property type="match status" value="1"/>
</dbReference>
<dbReference type="SUPFAM" id="SSF54593">
    <property type="entry name" value="Glyoxalase/Bleomycin resistance protein/Dihydroxybiphenyl dioxygenase"/>
    <property type="match status" value="1"/>
</dbReference>
<dbReference type="PROSITE" id="PS51819">
    <property type="entry name" value="VOC"/>
    <property type="match status" value="2"/>
</dbReference>
<comment type="function">
    <text evidence="2">Iron-dependent dioxygenase that catalyzes the conversion of 4-hydroxyphenylpyruvate (4-HPPA) to 4-hydroxymandelate (4-HMA) in the mitochondria, one of the steps in the biosynthesis of coenzyme Q10 from tyrosine.</text>
</comment>
<comment type="catalytic activity">
    <reaction evidence="2">
        <text>3-(4-hydroxyphenyl)pyruvate + O2 = (S)-4-hydroxymandelate + CO2</text>
        <dbReference type="Rhea" id="RHEA:21376"/>
        <dbReference type="ChEBI" id="CHEBI:15379"/>
        <dbReference type="ChEBI" id="CHEBI:16526"/>
        <dbReference type="ChEBI" id="CHEBI:17210"/>
        <dbReference type="ChEBI" id="CHEBI:36242"/>
        <dbReference type="EC" id="1.13.11.46"/>
    </reaction>
    <physiologicalReaction direction="left-to-right" evidence="2">
        <dbReference type="Rhea" id="RHEA:21377"/>
    </physiologicalReaction>
</comment>
<comment type="cofactor">
    <cofactor evidence="1">
        <name>Fe cation</name>
        <dbReference type="ChEBI" id="CHEBI:24875"/>
    </cofactor>
    <text evidence="1">Binds 1 Fe cation per subunit.</text>
</comment>
<comment type="subcellular location">
    <subcellularLocation>
        <location evidence="2">Mitochondrion</location>
    </subcellularLocation>
</comment>
<comment type="similarity">
    <text evidence="4">Belongs to the 4HPPD family.</text>
</comment>
<sequence>MTAPARRLCHIAFHVPAGQPLARDLHRVFGFQPLAVREAGGWRQLALRSGDAVFLVNEGTGPQEPLYSLDPHHSVPSATNLCFDVEDVDGAARALAARGCIMPVPPTRVRDAQGTATYTVLSSPAGNLSLTLLQRAGYRGSFLPGFRPLPCTPGPGWVSHVDHLTLACTSGSSPMLMRWFHDCLGFHHLPLSPGEDPEMGLKVAAGSGRGGLRLTALQTPPNNTVPTLVLAESLPGLNSKQDQVEQFLTRHGGPGLQHVGLYTPNIIDASEGMAKAGCRLLTPPEAYYQQPGKEEQILAAGHKPGLLERQGILLDGDKDEFLLQVFTKSLFAEDTFFLELIQRQGATGFGQNNIRALWQSVQEEAARAQGA</sequence>
<proteinExistence type="evidence at transcript level"/>
<keyword id="KW-0223">Dioxygenase</keyword>
<keyword id="KW-0408">Iron</keyword>
<keyword id="KW-0479">Metal-binding</keyword>
<keyword id="KW-0496">Mitochondrion</keyword>
<keyword id="KW-0560">Oxidoreductase</keyword>
<keyword id="KW-1185">Reference proteome</keyword>
<keyword id="KW-0677">Repeat</keyword>